<evidence type="ECO:0000255" key="1">
    <source>
        <dbReference type="HAMAP-Rule" id="MF_00031"/>
    </source>
</evidence>
<dbReference type="EMBL" id="CP000362">
    <property type="protein sequence ID" value="ABG31690.1"/>
    <property type="molecule type" value="Genomic_DNA"/>
</dbReference>
<dbReference type="RefSeq" id="WP_011568307.1">
    <property type="nucleotide sequence ID" value="NC_008209.1"/>
</dbReference>
<dbReference type="SMR" id="Q168A3"/>
<dbReference type="STRING" id="375451.RD1_2089"/>
<dbReference type="KEGG" id="rde:RD1_2089"/>
<dbReference type="eggNOG" id="COG0632">
    <property type="taxonomic scope" value="Bacteria"/>
</dbReference>
<dbReference type="HOGENOM" id="CLU_087936_3_0_5"/>
<dbReference type="OrthoDB" id="5293449at2"/>
<dbReference type="Proteomes" id="UP000007029">
    <property type="component" value="Chromosome"/>
</dbReference>
<dbReference type="GO" id="GO:0005737">
    <property type="term" value="C:cytoplasm"/>
    <property type="evidence" value="ECO:0007669"/>
    <property type="project" value="UniProtKB-SubCell"/>
</dbReference>
<dbReference type="GO" id="GO:0009379">
    <property type="term" value="C:Holliday junction helicase complex"/>
    <property type="evidence" value="ECO:0007669"/>
    <property type="project" value="InterPro"/>
</dbReference>
<dbReference type="GO" id="GO:0048476">
    <property type="term" value="C:Holliday junction resolvase complex"/>
    <property type="evidence" value="ECO:0007669"/>
    <property type="project" value="UniProtKB-UniRule"/>
</dbReference>
<dbReference type="GO" id="GO:0005524">
    <property type="term" value="F:ATP binding"/>
    <property type="evidence" value="ECO:0007669"/>
    <property type="project" value="InterPro"/>
</dbReference>
<dbReference type="GO" id="GO:0000400">
    <property type="term" value="F:four-way junction DNA binding"/>
    <property type="evidence" value="ECO:0007669"/>
    <property type="project" value="UniProtKB-UniRule"/>
</dbReference>
<dbReference type="GO" id="GO:0009378">
    <property type="term" value="F:four-way junction helicase activity"/>
    <property type="evidence" value="ECO:0007669"/>
    <property type="project" value="InterPro"/>
</dbReference>
<dbReference type="GO" id="GO:0006310">
    <property type="term" value="P:DNA recombination"/>
    <property type="evidence" value="ECO:0007669"/>
    <property type="project" value="UniProtKB-UniRule"/>
</dbReference>
<dbReference type="GO" id="GO:0006281">
    <property type="term" value="P:DNA repair"/>
    <property type="evidence" value="ECO:0007669"/>
    <property type="project" value="UniProtKB-UniRule"/>
</dbReference>
<dbReference type="CDD" id="cd14332">
    <property type="entry name" value="UBA_RuvA_C"/>
    <property type="match status" value="1"/>
</dbReference>
<dbReference type="Gene3D" id="1.10.150.20">
    <property type="entry name" value="5' to 3' exonuclease, C-terminal subdomain"/>
    <property type="match status" value="1"/>
</dbReference>
<dbReference type="Gene3D" id="1.10.8.10">
    <property type="entry name" value="DNA helicase RuvA subunit, C-terminal domain"/>
    <property type="match status" value="1"/>
</dbReference>
<dbReference type="Gene3D" id="2.40.50.140">
    <property type="entry name" value="Nucleic acid-binding proteins"/>
    <property type="match status" value="1"/>
</dbReference>
<dbReference type="HAMAP" id="MF_00031">
    <property type="entry name" value="DNA_HJ_migration_RuvA"/>
    <property type="match status" value="1"/>
</dbReference>
<dbReference type="InterPro" id="IPR013849">
    <property type="entry name" value="DNA_helicase_Holl-junc_RuvA_I"/>
</dbReference>
<dbReference type="InterPro" id="IPR012340">
    <property type="entry name" value="NA-bd_OB-fold"/>
</dbReference>
<dbReference type="InterPro" id="IPR000085">
    <property type="entry name" value="RuvA"/>
</dbReference>
<dbReference type="InterPro" id="IPR010994">
    <property type="entry name" value="RuvA_2-like"/>
</dbReference>
<dbReference type="InterPro" id="IPR011114">
    <property type="entry name" value="RuvA_C"/>
</dbReference>
<dbReference type="InterPro" id="IPR036267">
    <property type="entry name" value="RuvA_C_sf"/>
</dbReference>
<dbReference type="NCBIfam" id="TIGR00084">
    <property type="entry name" value="ruvA"/>
    <property type="match status" value="1"/>
</dbReference>
<dbReference type="Pfam" id="PF14520">
    <property type="entry name" value="HHH_5"/>
    <property type="match status" value="1"/>
</dbReference>
<dbReference type="Pfam" id="PF07499">
    <property type="entry name" value="RuvA_C"/>
    <property type="match status" value="1"/>
</dbReference>
<dbReference type="Pfam" id="PF01330">
    <property type="entry name" value="RuvA_N"/>
    <property type="match status" value="1"/>
</dbReference>
<dbReference type="SUPFAM" id="SSF46929">
    <property type="entry name" value="DNA helicase RuvA subunit, C-terminal domain"/>
    <property type="match status" value="1"/>
</dbReference>
<dbReference type="SUPFAM" id="SSF50249">
    <property type="entry name" value="Nucleic acid-binding proteins"/>
    <property type="match status" value="1"/>
</dbReference>
<dbReference type="SUPFAM" id="SSF47781">
    <property type="entry name" value="RuvA domain 2-like"/>
    <property type="match status" value="1"/>
</dbReference>
<reference key="1">
    <citation type="journal article" date="2007" name="J. Bacteriol.">
        <title>The complete genome sequence of Roseobacter denitrificans reveals a mixotrophic rather than photosynthetic metabolism.</title>
        <authorList>
            <person name="Swingley W.D."/>
            <person name="Sadekar S."/>
            <person name="Mastrian S.D."/>
            <person name="Matthies H.J."/>
            <person name="Hao J."/>
            <person name="Ramos H."/>
            <person name="Acharya C.R."/>
            <person name="Conrad A.L."/>
            <person name="Taylor H.L."/>
            <person name="Dejesa L.C."/>
            <person name="Shah M.K."/>
            <person name="O'Huallachain M.E."/>
            <person name="Lince M.T."/>
            <person name="Blankenship R.E."/>
            <person name="Beatty J.T."/>
            <person name="Touchman J.W."/>
        </authorList>
    </citation>
    <scope>NUCLEOTIDE SEQUENCE [LARGE SCALE GENOMIC DNA]</scope>
    <source>
        <strain>ATCC 33942 / OCh 114</strain>
    </source>
</reference>
<protein>
    <recommendedName>
        <fullName evidence="1">Holliday junction branch migration complex subunit RuvA</fullName>
    </recommendedName>
</protein>
<gene>
    <name evidence="1" type="primary">ruvA</name>
    <name type="ordered locus">RD1_2089</name>
</gene>
<proteinExistence type="inferred from homology"/>
<organism>
    <name type="scientific">Roseobacter denitrificans (strain ATCC 33942 / OCh 114)</name>
    <name type="common">Erythrobacter sp. (strain OCh 114)</name>
    <name type="synonym">Roseobacter denitrificans</name>
    <dbReference type="NCBI Taxonomy" id="375451"/>
    <lineage>
        <taxon>Bacteria</taxon>
        <taxon>Pseudomonadati</taxon>
        <taxon>Pseudomonadota</taxon>
        <taxon>Alphaproteobacteria</taxon>
        <taxon>Rhodobacterales</taxon>
        <taxon>Roseobacteraceae</taxon>
        <taxon>Roseobacter</taxon>
    </lineage>
</organism>
<accession>Q168A3</accession>
<sequence length="218" mass="22544">MIGKITGRLEYRASDHVLIDVRGVGYLVFCSERTLAALPGVGEVVALYTDLLVREDVMQLFGFTTLTEKEWHRLLTSVQGVGAKASLAILGTLGADGVSRAIALGDWNAVKAAKGVGPKIAQRVVLDLKDKAPSVMGMSDTQATVAAQSSDAVIETRAAPSPVVQNPSAQAEALSALSNLGYAPGDAAAAVAQAAGELPDAETPDLIRAALKRLAPKG</sequence>
<feature type="chain" id="PRO_1000002539" description="Holliday junction branch migration complex subunit RuvA">
    <location>
        <begin position="1"/>
        <end position="218"/>
    </location>
</feature>
<feature type="region of interest" description="Domain I" evidence="1">
    <location>
        <begin position="1"/>
        <end position="64"/>
    </location>
</feature>
<feature type="region of interest" description="Domain II" evidence="1">
    <location>
        <begin position="65"/>
        <end position="143"/>
    </location>
</feature>
<feature type="region of interest" description="Flexible linker" evidence="1">
    <location>
        <begin position="144"/>
        <end position="164"/>
    </location>
</feature>
<feature type="region of interest" description="Domain III" evidence="1">
    <location>
        <begin position="165"/>
        <end position="218"/>
    </location>
</feature>
<comment type="function">
    <text evidence="1">The RuvA-RuvB-RuvC complex processes Holliday junction (HJ) DNA during genetic recombination and DNA repair, while the RuvA-RuvB complex plays an important role in the rescue of blocked DNA replication forks via replication fork reversal (RFR). RuvA specifically binds to HJ cruciform DNA, conferring on it an open structure. The RuvB hexamer acts as an ATP-dependent pump, pulling dsDNA into and through the RuvAB complex. HJ branch migration allows RuvC to scan DNA until it finds its consensus sequence, where it cleaves and resolves the cruciform DNA.</text>
</comment>
<comment type="subunit">
    <text evidence="1">Homotetramer. Forms an RuvA(8)-RuvB(12)-Holliday junction (HJ) complex. HJ DNA is sandwiched between 2 RuvA tetramers; dsDNA enters through RuvA and exits via RuvB. An RuvB hexamer assembles on each DNA strand where it exits the tetramer. Each RuvB hexamer is contacted by two RuvA subunits (via domain III) on 2 adjacent RuvB subunits; this complex drives branch migration. In the full resolvosome a probable DNA-RuvA(4)-RuvB(12)-RuvC(2) complex forms which resolves the HJ.</text>
</comment>
<comment type="subcellular location">
    <subcellularLocation>
        <location evidence="1">Cytoplasm</location>
    </subcellularLocation>
</comment>
<comment type="domain">
    <text evidence="1">Has three domains with a flexible linker between the domains II and III and assumes an 'L' shape. Domain III is highly mobile and contacts RuvB.</text>
</comment>
<comment type="similarity">
    <text evidence="1">Belongs to the RuvA family.</text>
</comment>
<keyword id="KW-0963">Cytoplasm</keyword>
<keyword id="KW-0227">DNA damage</keyword>
<keyword id="KW-0233">DNA recombination</keyword>
<keyword id="KW-0234">DNA repair</keyword>
<keyword id="KW-0238">DNA-binding</keyword>
<keyword id="KW-1185">Reference proteome</keyword>
<name>RUVA_ROSDO</name>